<sequence length="242" mass="27045">MKVSLFITCLSDVFFPQVGKSVVEIMNQCGVELDFPEGQTCCGQPAYNSGYQEDAKLAAKQMIKAFEHSEYIVTPSGSCASMVHHYYKEMFKGDSEWYEKAVHLADRTYELTDFLVNVLGKNDWKSKLVEKAVFHQSCHMSRALGIKEEPLKLLSQVEGLDIKELPYCQDCCGFGGTFAVKMSSISETMVDEKIKHIEATEANLLIGADMGCLMNIGGRLRRKNKNIQVLHVAEVLAKGLNK</sequence>
<feature type="chain" id="PRO_0000384029" description="Lactate utilization protein A 2">
    <location>
        <begin position="1"/>
        <end position="242"/>
    </location>
</feature>
<accession>C1EKT5</accession>
<comment type="function">
    <text evidence="1">Is involved in L-lactate degradation and allows cells to grow with lactate as the sole carbon source.</text>
</comment>
<comment type="similarity">
    <text evidence="1">Belongs to the LutA/YkgE family.</text>
</comment>
<gene>
    <name evidence="1" type="primary">lutA2</name>
    <name type="ordered locus">BCA_3298</name>
</gene>
<reference key="1">
    <citation type="submission" date="2009-02" db="EMBL/GenBank/DDBJ databases">
        <title>Genome sequence of Bacillus cereus 03BB102.</title>
        <authorList>
            <person name="Dodson R.J."/>
            <person name="Jackson P."/>
            <person name="Munk A.C."/>
            <person name="Brettin T."/>
            <person name="Bruce D."/>
            <person name="Detter C."/>
            <person name="Tapia R."/>
            <person name="Han C."/>
            <person name="Sutton G."/>
            <person name="Sims D."/>
        </authorList>
    </citation>
    <scope>NUCLEOTIDE SEQUENCE [LARGE SCALE GENOMIC DNA]</scope>
    <source>
        <strain>03BB102</strain>
    </source>
</reference>
<name>LUTA2_BACC3</name>
<protein>
    <recommendedName>
        <fullName evidence="1">Lactate utilization protein A 2</fullName>
    </recommendedName>
</protein>
<organism>
    <name type="scientific">Bacillus cereus (strain 03BB102)</name>
    <dbReference type="NCBI Taxonomy" id="572264"/>
    <lineage>
        <taxon>Bacteria</taxon>
        <taxon>Bacillati</taxon>
        <taxon>Bacillota</taxon>
        <taxon>Bacilli</taxon>
        <taxon>Bacillales</taxon>
        <taxon>Bacillaceae</taxon>
        <taxon>Bacillus</taxon>
        <taxon>Bacillus cereus group</taxon>
    </lineage>
</organism>
<dbReference type="EMBL" id="CP001407">
    <property type="protein sequence ID" value="ACO29810.1"/>
    <property type="molecule type" value="Genomic_DNA"/>
</dbReference>
<dbReference type="RefSeq" id="WP_000868790.1">
    <property type="nucleotide sequence ID" value="NZ_CP009318.1"/>
</dbReference>
<dbReference type="SMR" id="C1EKT5"/>
<dbReference type="KEGG" id="bcx:BCA_3298"/>
<dbReference type="PATRIC" id="fig|572264.18.peg.3258"/>
<dbReference type="Proteomes" id="UP000002210">
    <property type="component" value="Chromosome"/>
</dbReference>
<dbReference type="GO" id="GO:0005829">
    <property type="term" value="C:cytosol"/>
    <property type="evidence" value="ECO:0007669"/>
    <property type="project" value="TreeGrafter"/>
</dbReference>
<dbReference type="GO" id="GO:0016491">
    <property type="term" value="F:oxidoreductase activity"/>
    <property type="evidence" value="ECO:0007669"/>
    <property type="project" value="UniProtKB-ARBA"/>
</dbReference>
<dbReference type="GO" id="GO:0006089">
    <property type="term" value="P:lactate metabolic process"/>
    <property type="evidence" value="ECO:0007669"/>
    <property type="project" value="UniProtKB-UniRule"/>
</dbReference>
<dbReference type="HAMAP" id="MF_02105">
    <property type="entry name" value="LutA"/>
    <property type="match status" value="1"/>
</dbReference>
<dbReference type="InterPro" id="IPR004017">
    <property type="entry name" value="Cys_rich_dom"/>
</dbReference>
<dbReference type="InterPro" id="IPR022822">
    <property type="entry name" value="LutA"/>
</dbReference>
<dbReference type="PANTHER" id="PTHR30296:SF0">
    <property type="entry name" value="LACTATE UTILIZATION PROTEIN A"/>
    <property type="match status" value="1"/>
</dbReference>
<dbReference type="PANTHER" id="PTHR30296">
    <property type="entry name" value="UNCHARACTERIZED PROTEIN YKGE"/>
    <property type="match status" value="1"/>
</dbReference>
<dbReference type="Pfam" id="PF02754">
    <property type="entry name" value="CCG"/>
    <property type="match status" value="2"/>
</dbReference>
<proteinExistence type="inferred from homology"/>
<evidence type="ECO:0000255" key="1">
    <source>
        <dbReference type="HAMAP-Rule" id="MF_02105"/>
    </source>
</evidence>